<sequence length="376" mass="40025">MKIKKIKLLKALALTGAFGIVATVPVIVSSCSSTDNNGGTGDNNTGGGGSGTDQQQGTTYTPAIKSDVTLSGALSKIYDTTNTGDSRKNTNTLIAEDIKANPENYFTNGEDLKKVEGWSVTVDGSFDSNSVWTGDAYSKWSAVADTHKGVYKSTSKQLNINSLKDLKSQLDTSAKIKAICDESNLVFSTADADSYKIQNELGFTGGDLLHINVTATQAGKTLNMDLGIPVSDLNLKITDLKVSVTASNNSTGNNVAAVSDLTTNFTYNIGIKEEVTAPTEKPNLAKTDKGEVMKVLKALGYTQTGDETKLDNDKVSNSLGLYNCEFTAVSATPVEGSEDKFTIKLKAKPLTDYVWEDGTNTEKEISFEATFTMTGN</sequence>
<reference key="1">
    <citation type="journal article" date="2002" name="Nucleic Acids Res.">
        <title>The complete genomic sequence of Mycoplasma penetrans, an intracellular bacterial pathogen in humans.</title>
        <authorList>
            <person name="Sasaki Y."/>
            <person name="Ishikawa J."/>
            <person name="Yamashita A."/>
            <person name="Oshima K."/>
            <person name="Kenri T."/>
            <person name="Furuya K."/>
            <person name="Yoshino C."/>
            <person name="Horino A."/>
            <person name="Shiba T."/>
            <person name="Sasaki T."/>
            <person name="Hattori M."/>
        </authorList>
    </citation>
    <scope>NUCLEOTIDE SEQUENCE [LARGE SCALE GENOMIC DNA]</scope>
    <source>
        <strain>HF-2</strain>
    </source>
</reference>
<keyword id="KW-1003">Cell membrane</keyword>
<keyword id="KW-0449">Lipoprotein</keyword>
<keyword id="KW-0472">Membrane</keyword>
<keyword id="KW-0564">Palmitate</keyword>
<keyword id="KW-1185">Reference proteome</keyword>
<keyword id="KW-0732">Signal</keyword>
<accession>P0DI98</accession>
<accession>Q50368</accession>
<gene>
    <name type="ordered locus">MYPE6800</name>
</gene>
<protein>
    <recommendedName>
        <fullName>Lipoprotein p33</fullName>
    </recommendedName>
</protein>
<comment type="subcellular location">
    <subcellularLocation>
        <location evidence="1">Cell membrane</location>
        <topology evidence="1">Lipid-anchor</topology>
    </subcellularLocation>
</comment>
<comment type="similarity">
    <text evidence="3">Belongs to the p35 lipoprotein family.</text>
</comment>
<proteinExistence type="inferred from homology"/>
<organism>
    <name type="scientific">Malacoplasma penetrans (strain HF-2)</name>
    <name type="common">Mycoplasma penetrans</name>
    <dbReference type="NCBI Taxonomy" id="272633"/>
    <lineage>
        <taxon>Bacteria</taxon>
        <taxon>Bacillati</taxon>
        <taxon>Mycoplasmatota</taxon>
        <taxon>Mycoplasmoidales</taxon>
        <taxon>Mycoplasmoidaceae</taxon>
        <taxon>Malacoplasma</taxon>
    </lineage>
</organism>
<dbReference type="EMBL" id="BA000026">
    <property type="protein sequence ID" value="BAC44472.1"/>
    <property type="molecule type" value="Genomic_DNA"/>
</dbReference>
<dbReference type="RefSeq" id="WP_011077502.1">
    <property type="nucleotide sequence ID" value="NC_004432.1"/>
</dbReference>
<dbReference type="KEGG" id="mpe:MYPE6800"/>
<dbReference type="HOGENOM" id="CLU_040028_0_0_14"/>
<dbReference type="InParanoid" id="P0DI98"/>
<dbReference type="Proteomes" id="UP000002522">
    <property type="component" value="Chromosome"/>
</dbReference>
<dbReference type="GO" id="GO:0005886">
    <property type="term" value="C:plasma membrane"/>
    <property type="evidence" value="ECO:0007669"/>
    <property type="project" value="UniProtKB-SubCell"/>
</dbReference>
<dbReference type="InterPro" id="IPR011653">
    <property type="entry name" value="Lipoprotein_p35"/>
</dbReference>
<dbReference type="Pfam" id="PF07668">
    <property type="entry name" value="MpPF1"/>
    <property type="match status" value="1"/>
</dbReference>
<dbReference type="PROSITE" id="PS51257">
    <property type="entry name" value="PROKAR_LIPOPROTEIN"/>
    <property type="match status" value="1"/>
</dbReference>
<name>P33_MALP2</name>
<evidence type="ECO:0000255" key="1">
    <source>
        <dbReference type="PROSITE-ProRule" id="PRU00303"/>
    </source>
</evidence>
<evidence type="ECO:0000256" key="2">
    <source>
        <dbReference type="SAM" id="MobiDB-lite"/>
    </source>
</evidence>
<evidence type="ECO:0000305" key="3"/>
<feature type="signal peptide" evidence="3">
    <location>
        <begin position="1"/>
        <end position="30"/>
    </location>
</feature>
<feature type="chain" id="PRO_0000018092" description="Lipoprotein p33">
    <location>
        <begin position="31"/>
        <end position="376"/>
    </location>
</feature>
<feature type="region of interest" description="Disordered" evidence="2">
    <location>
        <begin position="33"/>
        <end position="59"/>
    </location>
</feature>
<feature type="compositionally biased region" description="Gly residues" evidence="2">
    <location>
        <begin position="38"/>
        <end position="51"/>
    </location>
</feature>
<feature type="lipid moiety-binding region" description="N-palmitoyl cysteine" evidence="3">
    <location>
        <position position="31"/>
    </location>
</feature>
<feature type="lipid moiety-binding region" description="S-diacylglycerol cysteine" evidence="3">
    <location>
        <position position="31"/>
    </location>
</feature>